<sequence length="789" mass="86493">MFNLIRKSTEWGGKTLVLESGKIARQANGAVVVTYGGTTVLSTVVAGKAKEPVDFLPLTVQFVAKSYAVGKIPGGFLKREGKPSDRETLISRLIDRSIRPLFPSGFYDEVSIVCNLLSYDTVTPPEVTALIGATAALAISGVPFNGMVVGARVGYLLSEDKYLLNASADEMLSSSLDLFLSGNKDSVLMVESEASELSESQMLGAISFGHQNCQEVIKLIEEFREESGILPFGFIPHDITSLVDDIASSYTESFSIAYSNIVKKERVLELEKLRDQVLSDMLAKYEQPNGNLQCQYSSQDIISALKSFERSLVRSKIIETSSRIDGRAFNGIRDIEIEIDVLPKTHGSALFTRGNTQALVVTALGTPQDEQIVDDLDGDRRENFLLHYNFPPYAVGESAALRAPGRREIGHGKLAWKAIRYVLPEKSDFPYTIRVVSEITESDGSSSMATVCGASLALMDTGVPIKAPVAGIAMGLIKEGEKFIILSDILGDEDHLGDMDFKVAGTSSGITALQMDMKISGISIEVIEKSLLQAKDGRMHILDKMNLVIQESRECIKNHAPRIESIFINKDKIRNVIGSGGKNIREICEKTGARVEIMQDGTVMIYAINNDAVEYAKNMIMDIVSEPEIGKVFDGTVIEIVKFGAFVSFLGGKRGLIHISEIKNEHINAVGSVISVNDKVKVLVIGIDREYVQLSMRRVDQETGEPIDGELYNIRKTNSDSDDSFLSSGSVNNRHGSEKKRRGSGRSRRSSGGSSYHRDDLHNNGFGNGNRSFNDNRNGNEVPRKPRFF</sequence>
<feature type="chain" id="PRO_0000329633" description="Polyribonucleotide nucleotidyltransferase">
    <location>
        <begin position="1"/>
        <end position="789"/>
    </location>
</feature>
<feature type="domain" description="KH" evidence="1">
    <location>
        <begin position="561"/>
        <end position="620"/>
    </location>
</feature>
<feature type="domain" description="S1 motif" evidence="1">
    <location>
        <begin position="630"/>
        <end position="697"/>
    </location>
</feature>
<feature type="region of interest" description="Disordered" evidence="2">
    <location>
        <begin position="709"/>
        <end position="789"/>
    </location>
</feature>
<feature type="compositionally biased region" description="Basic residues" evidence="2">
    <location>
        <begin position="737"/>
        <end position="749"/>
    </location>
</feature>
<feature type="compositionally biased region" description="Low complexity" evidence="2">
    <location>
        <begin position="763"/>
        <end position="780"/>
    </location>
</feature>
<feature type="binding site" evidence="1">
    <location>
        <position position="494"/>
    </location>
    <ligand>
        <name>Mg(2+)</name>
        <dbReference type="ChEBI" id="CHEBI:18420"/>
    </ligand>
</feature>
<feature type="binding site" evidence="1">
    <location>
        <position position="500"/>
    </location>
    <ligand>
        <name>Mg(2+)</name>
        <dbReference type="ChEBI" id="CHEBI:18420"/>
    </ligand>
</feature>
<keyword id="KW-0963">Cytoplasm</keyword>
<keyword id="KW-0460">Magnesium</keyword>
<keyword id="KW-0479">Metal-binding</keyword>
<keyword id="KW-0548">Nucleotidyltransferase</keyword>
<keyword id="KW-0694">RNA-binding</keyword>
<keyword id="KW-0808">Transferase</keyword>
<reference key="1">
    <citation type="journal article" date="2005" name="Proc. Natl. Acad. Sci. U.S.A.">
        <title>The genome of the heartwater agent Ehrlichia ruminantium contains multiple tandem repeats of actively variable copy number.</title>
        <authorList>
            <person name="Collins N.E."/>
            <person name="Liebenberg J."/>
            <person name="de Villiers E.P."/>
            <person name="Brayton K.A."/>
            <person name="Louw E."/>
            <person name="Pretorius A."/>
            <person name="Faber F.E."/>
            <person name="van Heerden H."/>
            <person name="Josemans A."/>
            <person name="van Kleef M."/>
            <person name="Steyn H.C."/>
            <person name="van Strijp M.F."/>
            <person name="Zweygarth E."/>
            <person name="Jongejan F."/>
            <person name="Maillard J.C."/>
            <person name="Berthier D."/>
            <person name="Botha M."/>
            <person name="Joubert F."/>
            <person name="Corton C.H."/>
            <person name="Thomson N.R."/>
            <person name="Allsopp M.T."/>
            <person name="Allsopp B.A."/>
        </authorList>
    </citation>
    <scope>NUCLEOTIDE SEQUENCE [LARGE SCALE GENOMIC DNA]</scope>
    <source>
        <strain>Welgevonden</strain>
    </source>
</reference>
<reference key="2">
    <citation type="journal article" date="2006" name="J. Bacteriol.">
        <title>Comparative genomic analysis of three strains of Ehrlichia ruminantium reveals an active process of genome size plasticity.</title>
        <authorList>
            <person name="Frutos R."/>
            <person name="Viari A."/>
            <person name="Ferraz C."/>
            <person name="Morgat A."/>
            <person name="Eychenie S."/>
            <person name="Kandassamy Y."/>
            <person name="Chantal I."/>
            <person name="Bensaid A."/>
            <person name="Coissac E."/>
            <person name="Vachiery N."/>
            <person name="Demaille J."/>
            <person name="Martinez D."/>
        </authorList>
    </citation>
    <scope>NUCLEOTIDE SEQUENCE [LARGE SCALE GENOMIC DNA]</scope>
    <source>
        <strain>Welgevonden</strain>
    </source>
</reference>
<organism>
    <name type="scientific">Ehrlichia ruminantium (strain Welgevonden)</name>
    <dbReference type="NCBI Taxonomy" id="254945"/>
    <lineage>
        <taxon>Bacteria</taxon>
        <taxon>Pseudomonadati</taxon>
        <taxon>Pseudomonadota</taxon>
        <taxon>Alphaproteobacteria</taxon>
        <taxon>Rickettsiales</taxon>
        <taxon>Anaplasmataceae</taxon>
        <taxon>Ehrlichia</taxon>
    </lineage>
</organism>
<comment type="function">
    <text evidence="1">Involved in mRNA degradation. Catalyzes the phosphorolysis of single-stranded polyribonucleotides processively in the 3'- to 5'-direction.</text>
</comment>
<comment type="catalytic activity">
    <reaction evidence="1">
        <text>RNA(n+1) + phosphate = RNA(n) + a ribonucleoside 5'-diphosphate</text>
        <dbReference type="Rhea" id="RHEA:22096"/>
        <dbReference type="Rhea" id="RHEA-COMP:14527"/>
        <dbReference type="Rhea" id="RHEA-COMP:17342"/>
        <dbReference type="ChEBI" id="CHEBI:43474"/>
        <dbReference type="ChEBI" id="CHEBI:57930"/>
        <dbReference type="ChEBI" id="CHEBI:140395"/>
        <dbReference type="EC" id="2.7.7.8"/>
    </reaction>
</comment>
<comment type="cofactor">
    <cofactor evidence="1">
        <name>Mg(2+)</name>
        <dbReference type="ChEBI" id="CHEBI:18420"/>
    </cofactor>
</comment>
<comment type="subcellular location">
    <subcellularLocation>
        <location evidence="1">Cytoplasm</location>
    </subcellularLocation>
</comment>
<comment type="similarity">
    <text evidence="1">Belongs to the polyribonucleotide nucleotidyltransferase family.</text>
</comment>
<proteinExistence type="inferred from homology"/>
<accession>Q5HBH6</accession>
<accession>Q5FEG2</accession>
<name>PNP_EHRRW</name>
<protein>
    <recommendedName>
        <fullName evidence="1">Polyribonucleotide nucleotidyltransferase</fullName>
        <ecNumber evidence="1">2.7.7.8</ecNumber>
    </recommendedName>
    <alternativeName>
        <fullName evidence="1">Polynucleotide phosphorylase</fullName>
        <shortName evidence="1">PNPase</shortName>
    </alternativeName>
</protein>
<dbReference type="EC" id="2.7.7.8" evidence="1"/>
<dbReference type="EMBL" id="CR767821">
    <property type="protein sequence ID" value="CAH58074.1"/>
    <property type="molecule type" value="Genomic_DNA"/>
</dbReference>
<dbReference type="EMBL" id="CR925678">
    <property type="protein sequence ID" value="CAI26855.1"/>
    <property type="molecule type" value="Genomic_DNA"/>
</dbReference>
<dbReference type="RefSeq" id="WP_011155035.1">
    <property type="nucleotide sequence ID" value="NC_005295.2"/>
</dbReference>
<dbReference type="SMR" id="Q5HBH6"/>
<dbReference type="GeneID" id="33057972"/>
<dbReference type="KEGG" id="eru:Erum3540"/>
<dbReference type="KEGG" id="erw:ERWE_CDS_03610"/>
<dbReference type="eggNOG" id="COG1185">
    <property type="taxonomic scope" value="Bacteria"/>
</dbReference>
<dbReference type="HOGENOM" id="CLU_004217_2_2_5"/>
<dbReference type="Proteomes" id="UP000001021">
    <property type="component" value="Chromosome"/>
</dbReference>
<dbReference type="GO" id="GO:0005829">
    <property type="term" value="C:cytosol"/>
    <property type="evidence" value="ECO:0007669"/>
    <property type="project" value="TreeGrafter"/>
</dbReference>
<dbReference type="GO" id="GO:0000175">
    <property type="term" value="F:3'-5'-RNA exonuclease activity"/>
    <property type="evidence" value="ECO:0007669"/>
    <property type="project" value="TreeGrafter"/>
</dbReference>
<dbReference type="GO" id="GO:0000287">
    <property type="term" value="F:magnesium ion binding"/>
    <property type="evidence" value="ECO:0007669"/>
    <property type="project" value="UniProtKB-UniRule"/>
</dbReference>
<dbReference type="GO" id="GO:0004654">
    <property type="term" value="F:polyribonucleotide nucleotidyltransferase activity"/>
    <property type="evidence" value="ECO:0007669"/>
    <property type="project" value="UniProtKB-UniRule"/>
</dbReference>
<dbReference type="GO" id="GO:0003723">
    <property type="term" value="F:RNA binding"/>
    <property type="evidence" value="ECO:0007669"/>
    <property type="project" value="UniProtKB-UniRule"/>
</dbReference>
<dbReference type="GO" id="GO:0006402">
    <property type="term" value="P:mRNA catabolic process"/>
    <property type="evidence" value="ECO:0007669"/>
    <property type="project" value="UniProtKB-UniRule"/>
</dbReference>
<dbReference type="GO" id="GO:0006396">
    <property type="term" value="P:RNA processing"/>
    <property type="evidence" value="ECO:0007669"/>
    <property type="project" value="InterPro"/>
</dbReference>
<dbReference type="CDD" id="cd02393">
    <property type="entry name" value="KH-I_PNPase"/>
    <property type="match status" value="1"/>
</dbReference>
<dbReference type="CDD" id="cd11364">
    <property type="entry name" value="RNase_PH_PNPase_2"/>
    <property type="match status" value="1"/>
</dbReference>
<dbReference type="FunFam" id="3.30.1370.10:FF:000001">
    <property type="entry name" value="Polyribonucleotide nucleotidyltransferase"/>
    <property type="match status" value="1"/>
</dbReference>
<dbReference type="FunFam" id="3.30.230.70:FF:000001">
    <property type="entry name" value="Polyribonucleotide nucleotidyltransferase"/>
    <property type="match status" value="1"/>
</dbReference>
<dbReference type="FunFam" id="3.30.230.70:FF:000002">
    <property type="entry name" value="Polyribonucleotide nucleotidyltransferase"/>
    <property type="match status" value="1"/>
</dbReference>
<dbReference type="Gene3D" id="3.30.230.70">
    <property type="entry name" value="GHMP Kinase, N-terminal domain"/>
    <property type="match status" value="2"/>
</dbReference>
<dbReference type="Gene3D" id="3.30.1370.10">
    <property type="entry name" value="K Homology domain, type 1"/>
    <property type="match status" value="1"/>
</dbReference>
<dbReference type="Gene3D" id="2.40.50.140">
    <property type="entry name" value="Nucleic acid-binding proteins"/>
    <property type="match status" value="1"/>
</dbReference>
<dbReference type="HAMAP" id="MF_01595">
    <property type="entry name" value="PNPase"/>
    <property type="match status" value="1"/>
</dbReference>
<dbReference type="InterPro" id="IPR001247">
    <property type="entry name" value="ExoRNase_PH_dom1"/>
</dbReference>
<dbReference type="InterPro" id="IPR015847">
    <property type="entry name" value="ExoRNase_PH_dom2"/>
</dbReference>
<dbReference type="InterPro" id="IPR036345">
    <property type="entry name" value="ExoRNase_PH_dom2_sf"/>
</dbReference>
<dbReference type="InterPro" id="IPR004087">
    <property type="entry name" value="KH_dom"/>
</dbReference>
<dbReference type="InterPro" id="IPR004088">
    <property type="entry name" value="KH_dom_type_1"/>
</dbReference>
<dbReference type="InterPro" id="IPR036612">
    <property type="entry name" value="KH_dom_type_1_sf"/>
</dbReference>
<dbReference type="InterPro" id="IPR012340">
    <property type="entry name" value="NA-bd_OB-fold"/>
</dbReference>
<dbReference type="InterPro" id="IPR012162">
    <property type="entry name" value="PNPase"/>
</dbReference>
<dbReference type="InterPro" id="IPR027408">
    <property type="entry name" value="PNPase/RNase_PH_dom_sf"/>
</dbReference>
<dbReference type="InterPro" id="IPR015848">
    <property type="entry name" value="PNPase_PH_RNA-bd_bac/org-type"/>
</dbReference>
<dbReference type="InterPro" id="IPR020568">
    <property type="entry name" value="Ribosomal_Su5_D2-typ_SF"/>
</dbReference>
<dbReference type="InterPro" id="IPR003029">
    <property type="entry name" value="S1_domain"/>
</dbReference>
<dbReference type="NCBIfam" id="TIGR03591">
    <property type="entry name" value="polynuc_phos"/>
    <property type="match status" value="1"/>
</dbReference>
<dbReference type="NCBIfam" id="NF008805">
    <property type="entry name" value="PRK11824.1"/>
    <property type="match status" value="1"/>
</dbReference>
<dbReference type="PANTHER" id="PTHR11252">
    <property type="entry name" value="POLYRIBONUCLEOTIDE NUCLEOTIDYLTRANSFERASE"/>
    <property type="match status" value="1"/>
</dbReference>
<dbReference type="PANTHER" id="PTHR11252:SF0">
    <property type="entry name" value="POLYRIBONUCLEOTIDE NUCLEOTIDYLTRANSFERASE 1, MITOCHONDRIAL"/>
    <property type="match status" value="1"/>
</dbReference>
<dbReference type="Pfam" id="PF00013">
    <property type="entry name" value="KH_1"/>
    <property type="match status" value="1"/>
</dbReference>
<dbReference type="Pfam" id="PF03726">
    <property type="entry name" value="PNPase"/>
    <property type="match status" value="1"/>
</dbReference>
<dbReference type="Pfam" id="PF01138">
    <property type="entry name" value="RNase_PH"/>
    <property type="match status" value="2"/>
</dbReference>
<dbReference type="Pfam" id="PF03725">
    <property type="entry name" value="RNase_PH_C"/>
    <property type="match status" value="2"/>
</dbReference>
<dbReference type="Pfam" id="PF00575">
    <property type="entry name" value="S1"/>
    <property type="match status" value="1"/>
</dbReference>
<dbReference type="PIRSF" id="PIRSF005499">
    <property type="entry name" value="PNPase"/>
    <property type="match status" value="1"/>
</dbReference>
<dbReference type="SMART" id="SM00322">
    <property type="entry name" value="KH"/>
    <property type="match status" value="1"/>
</dbReference>
<dbReference type="SMART" id="SM00316">
    <property type="entry name" value="S1"/>
    <property type="match status" value="1"/>
</dbReference>
<dbReference type="SUPFAM" id="SSF54791">
    <property type="entry name" value="Eukaryotic type KH-domain (KH-domain type I)"/>
    <property type="match status" value="1"/>
</dbReference>
<dbReference type="SUPFAM" id="SSF50249">
    <property type="entry name" value="Nucleic acid-binding proteins"/>
    <property type="match status" value="1"/>
</dbReference>
<dbReference type="SUPFAM" id="SSF55666">
    <property type="entry name" value="Ribonuclease PH domain 2-like"/>
    <property type="match status" value="2"/>
</dbReference>
<dbReference type="SUPFAM" id="SSF54211">
    <property type="entry name" value="Ribosomal protein S5 domain 2-like"/>
    <property type="match status" value="2"/>
</dbReference>
<dbReference type="PROSITE" id="PS50084">
    <property type="entry name" value="KH_TYPE_1"/>
    <property type="match status" value="1"/>
</dbReference>
<dbReference type="PROSITE" id="PS50126">
    <property type="entry name" value="S1"/>
    <property type="match status" value="1"/>
</dbReference>
<evidence type="ECO:0000255" key="1">
    <source>
        <dbReference type="HAMAP-Rule" id="MF_01595"/>
    </source>
</evidence>
<evidence type="ECO:0000256" key="2">
    <source>
        <dbReference type="SAM" id="MobiDB-lite"/>
    </source>
</evidence>
<gene>
    <name evidence="1" type="primary">pnp</name>
    <name type="ordered locus">Erum3540</name>
    <name type="ordered locus">ERWE_CDS_03610</name>
</gene>